<comment type="function">
    <text evidence="1">Catalyzes the anti-1,4-elimination of the C-3 phosphate and the C-6 proR hydrogen from 5-enolpyruvylshikimate-3-phosphate (EPSP) to yield chorismate, which is the branch point compound that serves as the starting substrate for the three terminal pathways of aromatic amino acid biosynthesis. This reaction introduces a second double bond into the aromatic ring system.</text>
</comment>
<comment type="catalytic activity">
    <reaction evidence="1">
        <text>5-O-(1-carboxyvinyl)-3-phosphoshikimate = chorismate + phosphate</text>
        <dbReference type="Rhea" id="RHEA:21020"/>
        <dbReference type="ChEBI" id="CHEBI:29748"/>
        <dbReference type="ChEBI" id="CHEBI:43474"/>
        <dbReference type="ChEBI" id="CHEBI:57701"/>
        <dbReference type="EC" id="4.2.3.5"/>
    </reaction>
</comment>
<comment type="cofactor">
    <cofactor evidence="1">
        <name>FMNH2</name>
        <dbReference type="ChEBI" id="CHEBI:57618"/>
    </cofactor>
    <text evidence="1">Reduced FMN (FMNH(2)).</text>
</comment>
<comment type="pathway">
    <text evidence="1">Metabolic intermediate biosynthesis; chorismate biosynthesis; chorismate from D-erythrose 4-phosphate and phosphoenolpyruvate: step 7/7.</text>
</comment>
<comment type="subunit">
    <text evidence="1">Homotetramer.</text>
</comment>
<comment type="similarity">
    <text evidence="1">Belongs to the chorismate synthase family.</text>
</comment>
<name>AROC_STREM</name>
<feature type="chain" id="PRO_1000115401" description="Chorismate synthase">
    <location>
        <begin position="1"/>
        <end position="388"/>
    </location>
</feature>
<feature type="binding site" evidence="1">
    <location>
        <position position="39"/>
    </location>
    <ligand>
        <name>NADP(+)</name>
        <dbReference type="ChEBI" id="CHEBI:58349"/>
    </ligand>
</feature>
<feature type="binding site" evidence="1">
    <location>
        <position position="45"/>
    </location>
    <ligand>
        <name>NADP(+)</name>
        <dbReference type="ChEBI" id="CHEBI:58349"/>
    </ligand>
</feature>
<feature type="binding site" evidence="1">
    <location>
        <begin position="130"/>
        <end position="132"/>
    </location>
    <ligand>
        <name>FMN</name>
        <dbReference type="ChEBI" id="CHEBI:58210"/>
    </ligand>
</feature>
<feature type="binding site" evidence="1">
    <location>
        <begin position="251"/>
        <end position="252"/>
    </location>
    <ligand>
        <name>FMN</name>
        <dbReference type="ChEBI" id="CHEBI:58210"/>
    </ligand>
</feature>
<feature type="binding site" evidence="1">
    <location>
        <position position="296"/>
    </location>
    <ligand>
        <name>FMN</name>
        <dbReference type="ChEBI" id="CHEBI:58210"/>
    </ligand>
</feature>
<feature type="binding site" evidence="1">
    <location>
        <begin position="311"/>
        <end position="315"/>
    </location>
    <ligand>
        <name>FMN</name>
        <dbReference type="ChEBI" id="CHEBI:58210"/>
    </ligand>
</feature>
<feature type="binding site" evidence="1">
    <location>
        <position position="337"/>
    </location>
    <ligand>
        <name>FMN</name>
        <dbReference type="ChEBI" id="CHEBI:58210"/>
    </ligand>
</feature>
<accession>B4U2K7</accession>
<keyword id="KW-0028">Amino-acid biosynthesis</keyword>
<keyword id="KW-0057">Aromatic amino acid biosynthesis</keyword>
<keyword id="KW-0274">FAD</keyword>
<keyword id="KW-0285">Flavoprotein</keyword>
<keyword id="KW-0288">FMN</keyword>
<keyword id="KW-0456">Lyase</keyword>
<keyword id="KW-0521">NADP</keyword>
<organism>
    <name type="scientific">Streptococcus equi subsp. zooepidemicus (strain MGCS10565)</name>
    <dbReference type="NCBI Taxonomy" id="552526"/>
    <lineage>
        <taxon>Bacteria</taxon>
        <taxon>Bacillati</taxon>
        <taxon>Bacillota</taxon>
        <taxon>Bacilli</taxon>
        <taxon>Lactobacillales</taxon>
        <taxon>Streptococcaceae</taxon>
        <taxon>Streptococcus</taxon>
    </lineage>
</organism>
<dbReference type="EC" id="4.2.3.5" evidence="1"/>
<dbReference type="EMBL" id="CP001129">
    <property type="protein sequence ID" value="ACG62224.1"/>
    <property type="molecule type" value="Genomic_DNA"/>
</dbReference>
<dbReference type="RefSeq" id="WP_012515496.1">
    <property type="nucleotide sequence ID" value="NC_011134.1"/>
</dbReference>
<dbReference type="SMR" id="B4U2K7"/>
<dbReference type="KEGG" id="sez:Sez_0865"/>
<dbReference type="HOGENOM" id="CLU_034547_2_0_9"/>
<dbReference type="UniPathway" id="UPA00053">
    <property type="reaction ID" value="UER00090"/>
</dbReference>
<dbReference type="Proteomes" id="UP000001873">
    <property type="component" value="Chromosome"/>
</dbReference>
<dbReference type="GO" id="GO:0005829">
    <property type="term" value="C:cytosol"/>
    <property type="evidence" value="ECO:0007669"/>
    <property type="project" value="TreeGrafter"/>
</dbReference>
<dbReference type="GO" id="GO:0004107">
    <property type="term" value="F:chorismate synthase activity"/>
    <property type="evidence" value="ECO:0007669"/>
    <property type="project" value="UniProtKB-UniRule"/>
</dbReference>
<dbReference type="GO" id="GO:0010181">
    <property type="term" value="F:FMN binding"/>
    <property type="evidence" value="ECO:0007669"/>
    <property type="project" value="TreeGrafter"/>
</dbReference>
<dbReference type="GO" id="GO:0008652">
    <property type="term" value="P:amino acid biosynthetic process"/>
    <property type="evidence" value="ECO:0007669"/>
    <property type="project" value="UniProtKB-KW"/>
</dbReference>
<dbReference type="GO" id="GO:0009073">
    <property type="term" value="P:aromatic amino acid family biosynthetic process"/>
    <property type="evidence" value="ECO:0007669"/>
    <property type="project" value="UniProtKB-KW"/>
</dbReference>
<dbReference type="GO" id="GO:0009423">
    <property type="term" value="P:chorismate biosynthetic process"/>
    <property type="evidence" value="ECO:0007669"/>
    <property type="project" value="UniProtKB-UniRule"/>
</dbReference>
<dbReference type="CDD" id="cd07304">
    <property type="entry name" value="Chorismate_synthase"/>
    <property type="match status" value="1"/>
</dbReference>
<dbReference type="FunFam" id="3.60.150.10:FF:000002">
    <property type="entry name" value="Chorismate synthase"/>
    <property type="match status" value="1"/>
</dbReference>
<dbReference type="Gene3D" id="3.60.150.10">
    <property type="entry name" value="Chorismate synthase AroC"/>
    <property type="match status" value="1"/>
</dbReference>
<dbReference type="HAMAP" id="MF_00300">
    <property type="entry name" value="Chorismate_synth"/>
    <property type="match status" value="1"/>
</dbReference>
<dbReference type="InterPro" id="IPR000453">
    <property type="entry name" value="Chorismate_synth"/>
</dbReference>
<dbReference type="InterPro" id="IPR035904">
    <property type="entry name" value="Chorismate_synth_AroC_sf"/>
</dbReference>
<dbReference type="InterPro" id="IPR020541">
    <property type="entry name" value="Chorismate_synthase_CS"/>
</dbReference>
<dbReference type="NCBIfam" id="TIGR00033">
    <property type="entry name" value="aroC"/>
    <property type="match status" value="1"/>
</dbReference>
<dbReference type="NCBIfam" id="NF003793">
    <property type="entry name" value="PRK05382.1"/>
    <property type="match status" value="1"/>
</dbReference>
<dbReference type="PANTHER" id="PTHR21085">
    <property type="entry name" value="CHORISMATE SYNTHASE"/>
    <property type="match status" value="1"/>
</dbReference>
<dbReference type="PANTHER" id="PTHR21085:SF0">
    <property type="entry name" value="CHORISMATE SYNTHASE"/>
    <property type="match status" value="1"/>
</dbReference>
<dbReference type="Pfam" id="PF01264">
    <property type="entry name" value="Chorismate_synt"/>
    <property type="match status" value="1"/>
</dbReference>
<dbReference type="PIRSF" id="PIRSF001456">
    <property type="entry name" value="Chorismate_synth"/>
    <property type="match status" value="1"/>
</dbReference>
<dbReference type="SUPFAM" id="SSF103263">
    <property type="entry name" value="Chorismate synthase, AroC"/>
    <property type="match status" value="1"/>
</dbReference>
<dbReference type="PROSITE" id="PS00787">
    <property type="entry name" value="CHORISMATE_SYNTHASE_1"/>
    <property type="match status" value="1"/>
</dbReference>
<dbReference type="PROSITE" id="PS00788">
    <property type="entry name" value="CHORISMATE_SYNTHASE_2"/>
    <property type="match status" value="1"/>
</dbReference>
<dbReference type="PROSITE" id="PS00789">
    <property type="entry name" value="CHORISMATE_SYNTHASE_3"/>
    <property type="match status" value="1"/>
</dbReference>
<reference key="1">
    <citation type="journal article" date="2008" name="PLoS ONE">
        <title>Genome sequence of a lancefield group C Streptococcus zooepidemicus strain causing epidemic nephritis: new information about an old disease.</title>
        <authorList>
            <person name="Beres S.B."/>
            <person name="Sesso R."/>
            <person name="Pinto S.W.L."/>
            <person name="Hoe N.P."/>
            <person name="Porcella S.F."/>
            <person name="Deleo F.R."/>
            <person name="Musser J.M."/>
        </authorList>
    </citation>
    <scope>NUCLEOTIDE SEQUENCE [LARGE SCALE GENOMIC DNA]</scope>
    <source>
        <strain>MGCS10565</strain>
    </source>
</reference>
<protein>
    <recommendedName>
        <fullName evidence="1">Chorismate synthase</fullName>
        <shortName evidence="1">CS</shortName>
        <ecNumber evidence="1">4.2.3.5</ecNumber>
    </recommendedName>
    <alternativeName>
        <fullName evidence="1">5-enolpyruvylshikimate-3-phosphate phospholyase</fullName>
    </alternativeName>
</protein>
<evidence type="ECO:0000255" key="1">
    <source>
        <dbReference type="HAMAP-Rule" id="MF_00300"/>
    </source>
</evidence>
<gene>
    <name evidence="1" type="primary">aroC</name>
    <name type="ordered locus">Sez_0865</name>
</gene>
<sequence>MRYLTAGESHGQALTAIIEGIPAGLALSAELINKELKRRQGGYGRGARMRIESDRVHISSGVRHGKTTGAPITLTIQNKDHQKWLDIMAVEAVEEQIKFKRKITRPRPGHADLVGGIKYRFDDLRNALERSSARETAMRVAVGAIAKAVLTELGIETANHVLVFGGIEVAVPEAMPFTDIKKAAEASDLSIVNPKQEATIKAHIDQVKKEGDTLGGIIETIIYGLPAGLGSYVQWDRKLDAKIAQTVLSINAFKGVEFGMGFDMGYQKGSQVMDDIIWHETSGYSRRTNRLGGFEAGMTTGQPIVVKGVMKPIPTLYKPLMSVDTETHEPYKATVERSDPTALPAAGVVMENVVATVITKEILEQFPSDNMTDLKQAFFAYRDYVHHF</sequence>
<proteinExistence type="inferred from homology"/>